<organism>
    <name type="scientific">Koribacter versatilis (strain Ellin345)</name>
    <dbReference type="NCBI Taxonomy" id="204669"/>
    <lineage>
        <taxon>Bacteria</taxon>
        <taxon>Pseudomonadati</taxon>
        <taxon>Acidobacteriota</taxon>
        <taxon>Terriglobia</taxon>
        <taxon>Terriglobales</taxon>
        <taxon>Candidatus Korobacteraceae</taxon>
        <taxon>Candidatus Korobacter</taxon>
    </lineage>
</organism>
<evidence type="ECO:0000255" key="1">
    <source>
        <dbReference type="HAMAP-Rule" id="MF_00406"/>
    </source>
</evidence>
<evidence type="ECO:0000305" key="2"/>
<comment type="function">
    <text evidence="1">Involved in unsaturated fatty acids biosynthesis. Catalyzes the dehydration of short chain beta-hydroxyacyl-ACPs and long chain saturated and unsaturated beta-hydroxyacyl-ACPs.</text>
</comment>
<comment type="catalytic activity">
    <reaction evidence="1">
        <text>a (3R)-hydroxyacyl-[ACP] = a (2E)-enoyl-[ACP] + H2O</text>
        <dbReference type="Rhea" id="RHEA:13097"/>
        <dbReference type="Rhea" id="RHEA-COMP:9925"/>
        <dbReference type="Rhea" id="RHEA-COMP:9945"/>
        <dbReference type="ChEBI" id="CHEBI:15377"/>
        <dbReference type="ChEBI" id="CHEBI:78784"/>
        <dbReference type="ChEBI" id="CHEBI:78827"/>
        <dbReference type="EC" id="4.2.1.59"/>
    </reaction>
</comment>
<comment type="subcellular location">
    <subcellularLocation>
        <location evidence="1">Cytoplasm</location>
    </subcellularLocation>
</comment>
<comment type="similarity">
    <text evidence="1">Belongs to the thioester dehydratase family. FabZ subfamily.</text>
</comment>
<comment type="sequence caution" evidence="2">
    <conflict type="erroneous initiation">
        <sequence resource="EMBL-CDS" id="ABF39241"/>
    </conflict>
</comment>
<keyword id="KW-0963">Cytoplasm</keyword>
<keyword id="KW-0441">Lipid A biosynthesis</keyword>
<keyword id="KW-0444">Lipid biosynthesis</keyword>
<keyword id="KW-0443">Lipid metabolism</keyword>
<keyword id="KW-0456">Lyase</keyword>
<keyword id="KW-1185">Reference proteome</keyword>
<feature type="chain" id="PRO_0000340750" description="3-hydroxyacyl-[acyl-carrier-protein] dehydratase FabZ">
    <location>
        <begin position="1"/>
        <end position="156"/>
    </location>
</feature>
<feature type="active site" evidence="1">
    <location>
        <position position="54"/>
    </location>
</feature>
<name>FABZ_KORVE</name>
<gene>
    <name evidence="1" type="primary">fabZ</name>
    <name type="ordered locus">Acid345_0236</name>
</gene>
<protein>
    <recommendedName>
        <fullName evidence="1">3-hydroxyacyl-[acyl-carrier-protein] dehydratase FabZ</fullName>
        <ecNumber evidence="1">4.2.1.59</ecNumber>
    </recommendedName>
    <alternativeName>
        <fullName evidence="1">(3R)-hydroxymyristoyl-[acyl-carrier-protein] dehydratase</fullName>
        <shortName evidence="1">(3R)-hydroxymyristoyl-ACP dehydrase</shortName>
    </alternativeName>
    <alternativeName>
        <fullName evidence="1">Beta-hydroxyacyl-ACP dehydratase</fullName>
    </alternativeName>
</protein>
<sequence>MAEAKQVLDVTDIQKILPHRYPLLLLDRIIEFKRKERIVAIKNVTINEQFFQGHFPGYPIMPGVLIVEAIAQAGGALLLTEIPDQNEKLMVFAGIEKAKFRKPVVPGDQVRLEVDVIVWRNTAAKLMGKAFVGDKLACEATVSCQIVPRPAKPENS</sequence>
<reference key="1">
    <citation type="journal article" date="2009" name="Appl. Environ. Microbiol.">
        <title>Three genomes from the phylum Acidobacteria provide insight into the lifestyles of these microorganisms in soils.</title>
        <authorList>
            <person name="Ward N.L."/>
            <person name="Challacombe J.F."/>
            <person name="Janssen P.H."/>
            <person name="Henrissat B."/>
            <person name="Coutinho P.M."/>
            <person name="Wu M."/>
            <person name="Xie G."/>
            <person name="Haft D.H."/>
            <person name="Sait M."/>
            <person name="Badger J."/>
            <person name="Barabote R.D."/>
            <person name="Bradley B."/>
            <person name="Brettin T.S."/>
            <person name="Brinkac L.M."/>
            <person name="Bruce D."/>
            <person name="Creasy T."/>
            <person name="Daugherty S.C."/>
            <person name="Davidsen T.M."/>
            <person name="DeBoy R.T."/>
            <person name="Detter J.C."/>
            <person name="Dodson R.J."/>
            <person name="Durkin A.S."/>
            <person name="Ganapathy A."/>
            <person name="Gwinn-Giglio M."/>
            <person name="Han C.S."/>
            <person name="Khouri H."/>
            <person name="Kiss H."/>
            <person name="Kothari S.P."/>
            <person name="Madupu R."/>
            <person name="Nelson K.E."/>
            <person name="Nelson W.C."/>
            <person name="Paulsen I."/>
            <person name="Penn K."/>
            <person name="Ren Q."/>
            <person name="Rosovitz M.J."/>
            <person name="Selengut J.D."/>
            <person name="Shrivastava S."/>
            <person name="Sullivan S.A."/>
            <person name="Tapia R."/>
            <person name="Thompson L.S."/>
            <person name="Watkins K.L."/>
            <person name="Yang Q."/>
            <person name="Yu C."/>
            <person name="Zafar N."/>
            <person name="Zhou L."/>
            <person name="Kuske C.R."/>
        </authorList>
    </citation>
    <scope>NUCLEOTIDE SEQUENCE [LARGE SCALE GENOMIC DNA]</scope>
    <source>
        <strain>Ellin345</strain>
    </source>
</reference>
<accession>Q1IV59</accession>
<proteinExistence type="inferred from homology"/>
<dbReference type="EC" id="4.2.1.59" evidence="1"/>
<dbReference type="EMBL" id="CP000360">
    <property type="protein sequence ID" value="ABF39241.1"/>
    <property type="status" value="ALT_INIT"/>
    <property type="molecule type" value="Genomic_DNA"/>
</dbReference>
<dbReference type="SMR" id="Q1IV59"/>
<dbReference type="STRING" id="204669.Acid345_0236"/>
<dbReference type="EnsemblBacteria" id="ABF39241">
    <property type="protein sequence ID" value="ABF39241"/>
    <property type="gene ID" value="Acid345_0236"/>
</dbReference>
<dbReference type="KEGG" id="aba:Acid345_0236"/>
<dbReference type="eggNOG" id="COG0764">
    <property type="taxonomic scope" value="Bacteria"/>
</dbReference>
<dbReference type="HOGENOM" id="CLU_078912_3_0_0"/>
<dbReference type="OrthoDB" id="9772788at2"/>
<dbReference type="Proteomes" id="UP000002432">
    <property type="component" value="Chromosome"/>
</dbReference>
<dbReference type="GO" id="GO:0005737">
    <property type="term" value="C:cytoplasm"/>
    <property type="evidence" value="ECO:0007669"/>
    <property type="project" value="UniProtKB-SubCell"/>
</dbReference>
<dbReference type="GO" id="GO:0016020">
    <property type="term" value="C:membrane"/>
    <property type="evidence" value="ECO:0007669"/>
    <property type="project" value="GOC"/>
</dbReference>
<dbReference type="GO" id="GO:0019171">
    <property type="term" value="F:(3R)-hydroxyacyl-[acyl-carrier-protein] dehydratase activity"/>
    <property type="evidence" value="ECO:0007669"/>
    <property type="project" value="UniProtKB-EC"/>
</dbReference>
<dbReference type="GO" id="GO:0006633">
    <property type="term" value="P:fatty acid biosynthetic process"/>
    <property type="evidence" value="ECO:0007669"/>
    <property type="project" value="UniProtKB-UniRule"/>
</dbReference>
<dbReference type="GO" id="GO:0009245">
    <property type="term" value="P:lipid A biosynthetic process"/>
    <property type="evidence" value="ECO:0007669"/>
    <property type="project" value="UniProtKB-UniRule"/>
</dbReference>
<dbReference type="CDD" id="cd01288">
    <property type="entry name" value="FabZ"/>
    <property type="match status" value="1"/>
</dbReference>
<dbReference type="FunFam" id="3.10.129.10:FF:000001">
    <property type="entry name" value="3-hydroxyacyl-[acyl-carrier-protein] dehydratase FabZ"/>
    <property type="match status" value="1"/>
</dbReference>
<dbReference type="Gene3D" id="3.10.129.10">
    <property type="entry name" value="Hotdog Thioesterase"/>
    <property type="match status" value="1"/>
</dbReference>
<dbReference type="HAMAP" id="MF_00406">
    <property type="entry name" value="FabZ"/>
    <property type="match status" value="1"/>
</dbReference>
<dbReference type="InterPro" id="IPR013114">
    <property type="entry name" value="FabA_FabZ"/>
</dbReference>
<dbReference type="InterPro" id="IPR010084">
    <property type="entry name" value="FabZ"/>
</dbReference>
<dbReference type="InterPro" id="IPR029069">
    <property type="entry name" value="HotDog_dom_sf"/>
</dbReference>
<dbReference type="NCBIfam" id="TIGR01750">
    <property type="entry name" value="fabZ"/>
    <property type="match status" value="1"/>
</dbReference>
<dbReference type="NCBIfam" id="NF000582">
    <property type="entry name" value="PRK00006.1"/>
    <property type="match status" value="1"/>
</dbReference>
<dbReference type="PANTHER" id="PTHR30272">
    <property type="entry name" value="3-HYDROXYACYL-[ACYL-CARRIER-PROTEIN] DEHYDRATASE"/>
    <property type="match status" value="1"/>
</dbReference>
<dbReference type="PANTHER" id="PTHR30272:SF1">
    <property type="entry name" value="3-HYDROXYACYL-[ACYL-CARRIER-PROTEIN] DEHYDRATASE"/>
    <property type="match status" value="1"/>
</dbReference>
<dbReference type="Pfam" id="PF07977">
    <property type="entry name" value="FabA"/>
    <property type="match status" value="1"/>
</dbReference>
<dbReference type="SUPFAM" id="SSF54637">
    <property type="entry name" value="Thioesterase/thiol ester dehydrase-isomerase"/>
    <property type="match status" value="1"/>
</dbReference>